<organism>
    <name type="scientific">Escherichia coli (strain K12)</name>
    <dbReference type="NCBI Taxonomy" id="83333"/>
    <lineage>
        <taxon>Bacteria</taxon>
        <taxon>Pseudomonadati</taxon>
        <taxon>Pseudomonadota</taxon>
        <taxon>Gammaproteobacteria</taxon>
        <taxon>Enterobacterales</taxon>
        <taxon>Enterobacteriaceae</taxon>
        <taxon>Escherichia</taxon>
    </lineage>
</organism>
<gene>
    <name type="primary">fecI</name>
    <name type="ordered locus">b4293</name>
    <name type="ordered locus">JW4253</name>
</gene>
<feature type="initiator methionine" description="Removed" evidence="5">
    <location>
        <position position="1"/>
    </location>
</feature>
<feature type="chain" id="PRO_0000094011" description="Ferric citrate uptake sigma factor FecI">
    <location>
        <begin position="2"/>
        <end position="173"/>
    </location>
</feature>
<feature type="DNA-binding region" description="H-T-H motif" evidence="1">
    <location>
        <begin position="139"/>
        <end position="158"/>
    </location>
</feature>
<feature type="short sequence motif" description="Polymerase core binding">
    <location>
        <begin position="40"/>
        <end position="52"/>
    </location>
</feature>
<sequence>MSDRATTTASLTFESLYGTHHGWLKSWLTRKLQSAFDADDIAQDTFLRVMVSETLSTIRDPRSFLCTIAKRVMVDLFRRNALEKAYLEMLALMPEGGAPSPEERESQLETLQLLDSMLDGLNGKTREAFLLSQLDGLTYSEIAHKLGVSISSVKKYVAKAVEHCLLFRLEYGL</sequence>
<comment type="function">
    <text evidence="4">Sigma factors are initiation factors that promote the attachment of RNA polymerase to specific initiation sites and are then released. This sigma factor regulates transcriptional activation of the fecABCDE operon which mediates ferric citrate transport.</text>
</comment>
<comment type="subunit">
    <text evidence="2">Interacts with FecR (via cytoplasmic N-terminus).</text>
</comment>
<comment type="induction">
    <text evidence="3">Induced 2.1-fold by hydroxyurea.</text>
</comment>
<comment type="similarity">
    <text evidence="6">Belongs to the sigma-70 factor family. ECF subfamily.</text>
</comment>
<reference key="1">
    <citation type="journal article" date="1990" name="J. Bacteriol.">
        <title>Novel two-component transmembrane transcription control: regulation of iron dicitrate transport in Escherichia coli K-12.</title>
        <authorList>
            <person name="van Hove B."/>
            <person name="Staudenmaier H."/>
            <person name="Braun V."/>
        </authorList>
    </citation>
    <scope>NUCLEOTIDE SEQUENCE [GENOMIC DNA]</scope>
    <scope>FUNCTION</scope>
    <source>
        <strain>K12</strain>
    </source>
</reference>
<reference key="2">
    <citation type="journal article" date="1995" name="Nucleic Acids Res.">
        <title>Analysis of the Escherichia coli genome VI: DNA sequence of the region from 92.8 through 100 minutes.</title>
        <authorList>
            <person name="Burland V.D."/>
            <person name="Plunkett G. III"/>
            <person name="Sofia H.J."/>
            <person name="Daniels D.L."/>
            <person name="Blattner F.R."/>
        </authorList>
    </citation>
    <scope>NUCLEOTIDE SEQUENCE [LARGE SCALE GENOMIC DNA]</scope>
    <source>
        <strain>K12 / MG1655 / ATCC 47076</strain>
    </source>
</reference>
<reference key="3">
    <citation type="journal article" date="1997" name="Science">
        <title>The complete genome sequence of Escherichia coli K-12.</title>
        <authorList>
            <person name="Blattner F.R."/>
            <person name="Plunkett G. III"/>
            <person name="Bloch C.A."/>
            <person name="Perna N.T."/>
            <person name="Burland V."/>
            <person name="Riley M."/>
            <person name="Collado-Vides J."/>
            <person name="Glasner J.D."/>
            <person name="Rode C.K."/>
            <person name="Mayhew G.F."/>
            <person name="Gregor J."/>
            <person name="Davis N.W."/>
            <person name="Kirkpatrick H.A."/>
            <person name="Goeden M.A."/>
            <person name="Rose D.J."/>
            <person name="Mau B."/>
            <person name="Shao Y."/>
        </authorList>
    </citation>
    <scope>NUCLEOTIDE SEQUENCE [LARGE SCALE GENOMIC DNA]</scope>
    <source>
        <strain>K12 / MG1655 / ATCC 47076</strain>
    </source>
</reference>
<reference key="4">
    <citation type="journal article" date="2006" name="Mol. Syst. Biol.">
        <title>Highly accurate genome sequences of Escherichia coli K-12 strains MG1655 and W3110.</title>
        <authorList>
            <person name="Hayashi K."/>
            <person name="Morooka N."/>
            <person name="Yamamoto Y."/>
            <person name="Fujita K."/>
            <person name="Isono K."/>
            <person name="Choi S."/>
            <person name="Ohtsubo E."/>
            <person name="Baba T."/>
            <person name="Wanner B.L."/>
            <person name="Mori H."/>
            <person name="Horiuchi T."/>
        </authorList>
    </citation>
    <scope>NUCLEOTIDE SEQUENCE [LARGE SCALE GENOMIC DNA]</scope>
    <source>
        <strain>K12 / W3110 / ATCC 27325 / DSM 5911</strain>
    </source>
</reference>
<reference key="5">
    <citation type="journal article" date="1995" name="Mol. Microbiol.">
        <title>Transcriptional regulation of ferric citrate transport in Escherichia coli K-12. Fecl belongs to a new subfamily of sigma 70-type factors that respond to extracytoplasmic stimuli.</title>
        <authorList>
            <person name="Angerer A."/>
            <person name="Enz S."/>
            <person name="Ochs M."/>
            <person name="Braun V."/>
        </authorList>
    </citation>
    <scope>PROTEIN SEQUENCE OF 2-11</scope>
</reference>
<reference key="6">
    <citation type="journal article" date="1994" name="Proc. Natl. Acad. Sci. U.S.A.">
        <title>Analysis of the Streptomyces coelicolor sigE gene reveals the existence of a subfamily of eubacterial RNA polymerase sigma factors involved in the regulation of extracytoplasmic functions.</title>
        <authorList>
            <person name="Lonetto M.A."/>
            <person name="Brown K.L."/>
            <person name="Rudd K.E."/>
            <person name="Buttner M.J."/>
        </authorList>
    </citation>
    <scope>SIMILARITY TO OTHER ECF SIGMA FACTORS</scope>
</reference>
<reference key="7">
    <citation type="journal article" date="2000" name="J. Bacteriol.">
        <title>Surface signaling in ferric citrate transport gene induction: interaction of the FecA, FecR, and FecI regulatory proteins.</title>
        <authorList>
            <person name="Enz S."/>
            <person name="Mahren S."/>
            <person name="Stroeher U.H."/>
            <person name="Braun V."/>
        </authorList>
    </citation>
    <scope>INTERACTION WITH FECR</scope>
</reference>
<reference key="8">
    <citation type="journal article" date="2009" name="Mol. Cell">
        <title>Hydroxyurea induces hydroxyl radical-mediated cell death in Escherichia coli.</title>
        <authorList>
            <person name="Davies B.W."/>
            <person name="Kohanski M.A."/>
            <person name="Simmons L.A."/>
            <person name="Winkler J.A."/>
            <person name="Collins J.J."/>
            <person name="Walker G.C."/>
        </authorList>
    </citation>
    <scope>INDUCTION BY HYDROXYUREA</scope>
    <source>
        <strain>K12 / MC4100 / ATCC 35695 / DSM 6574</strain>
    </source>
</reference>
<evidence type="ECO:0000250" key="1"/>
<evidence type="ECO:0000269" key="2">
    <source>
    </source>
</evidence>
<evidence type="ECO:0000269" key="3">
    <source>
    </source>
</evidence>
<evidence type="ECO:0000269" key="4">
    <source>
    </source>
</evidence>
<evidence type="ECO:0000269" key="5">
    <source>
    </source>
</evidence>
<evidence type="ECO:0000305" key="6"/>
<proteinExistence type="evidence at protein level"/>
<protein>
    <recommendedName>
        <fullName>Ferric citrate uptake sigma factor FecI</fullName>
    </recommendedName>
</protein>
<keyword id="KW-0903">Direct protein sequencing</keyword>
<keyword id="KW-0238">DNA-binding</keyword>
<keyword id="KW-0406">Ion transport</keyword>
<keyword id="KW-0408">Iron</keyword>
<keyword id="KW-0410">Iron transport</keyword>
<keyword id="KW-1185">Reference proteome</keyword>
<keyword id="KW-0731">Sigma factor</keyword>
<keyword id="KW-0804">Transcription</keyword>
<keyword id="KW-0805">Transcription regulation</keyword>
<keyword id="KW-0813">Transport</keyword>
<name>FECI_ECOLI</name>
<dbReference type="EMBL" id="M63115">
    <property type="protein sequence ID" value="AAA23766.1"/>
    <property type="molecule type" value="Genomic_DNA"/>
</dbReference>
<dbReference type="EMBL" id="U14003">
    <property type="protein sequence ID" value="AAA97189.1"/>
    <property type="molecule type" value="Genomic_DNA"/>
</dbReference>
<dbReference type="EMBL" id="U00096">
    <property type="protein sequence ID" value="AAC77249.1"/>
    <property type="molecule type" value="Genomic_DNA"/>
</dbReference>
<dbReference type="EMBL" id="AP009048">
    <property type="protein sequence ID" value="BAE78284.1"/>
    <property type="molecule type" value="Genomic_DNA"/>
</dbReference>
<dbReference type="PIR" id="JV0111">
    <property type="entry name" value="JV0111"/>
</dbReference>
<dbReference type="RefSeq" id="NP_418713.1">
    <property type="nucleotide sequence ID" value="NC_000913.3"/>
</dbReference>
<dbReference type="RefSeq" id="WP_001283626.1">
    <property type="nucleotide sequence ID" value="NZ_STEB01000013.1"/>
</dbReference>
<dbReference type="SMR" id="P23484"/>
<dbReference type="BioGRID" id="4261564">
    <property type="interactions" value="9"/>
</dbReference>
<dbReference type="ComplexPortal" id="CPX-4888">
    <property type="entry name" value="DNA-directed RNA polymerase holoenzyme complex, Sigma fecI variant"/>
</dbReference>
<dbReference type="DIP" id="DIP-9588N"/>
<dbReference type="FunCoup" id="P23484">
    <property type="interactions" value="233"/>
</dbReference>
<dbReference type="IntAct" id="P23484">
    <property type="interactions" value="8"/>
</dbReference>
<dbReference type="STRING" id="511145.b4293"/>
<dbReference type="PaxDb" id="511145-b4293"/>
<dbReference type="EnsemblBacteria" id="AAC77249">
    <property type="protein sequence ID" value="AAC77249"/>
    <property type="gene ID" value="b4293"/>
</dbReference>
<dbReference type="GeneID" id="93777538"/>
<dbReference type="GeneID" id="946839"/>
<dbReference type="KEGG" id="ecj:JW4253"/>
<dbReference type="KEGG" id="eco:b4293"/>
<dbReference type="KEGG" id="ecoc:C3026_23150"/>
<dbReference type="PATRIC" id="fig|1411691.4.peg.2406"/>
<dbReference type="EchoBASE" id="EB0287"/>
<dbReference type="eggNOG" id="COG1595">
    <property type="taxonomic scope" value="Bacteria"/>
</dbReference>
<dbReference type="HOGENOM" id="CLU_047691_12_1_6"/>
<dbReference type="InParanoid" id="P23484"/>
<dbReference type="OMA" id="HQEFRAL"/>
<dbReference type="OrthoDB" id="9797134at2"/>
<dbReference type="PhylomeDB" id="P23484"/>
<dbReference type="BioCyc" id="EcoCyc:PD00440"/>
<dbReference type="BioCyc" id="MetaCyc:PD00440"/>
<dbReference type="PHI-base" id="PHI:11748"/>
<dbReference type="PHI-base" id="PHI:8004"/>
<dbReference type="PRO" id="PR:P23484"/>
<dbReference type="Proteomes" id="UP000000625">
    <property type="component" value="Chromosome"/>
</dbReference>
<dbReference type="GO" id="GO:0000345">
    <property type="term" value="C:cytosolic DNA-directed RNA polymerase complex"/>
    <property type="evidence" value="ECO:0000250"/>
    <property type="project" value="ComplexPortal"/>
</dbReference>
<dbReference type="GO" id="GO:0001000">
    <property type="term" value="F:bacterial-type RNA polymerase core enzyme binding"/>
    <property type="evidence" value="ECO:0000314"/>
    <property type="project" value="EcoCyc"/>
</dbReference>
<dbReference type="GO" id="GO:0001046">
    <property type="term" value="F:core promoter sequence-specific DNA binding"/>
    <property type="evidence" value="ECO:0000314"/>
    <property type="project" value="EcoCyc"/>
</dbReference>
<dbReference type="GO" id="GO:0016987">
    <property type="term" value="F:sigma factor activity"/>
    <property type="evidence" value="ECO:0000314"/>
    <property type="project" value="EcoCyc"/>
</dbReference>
<dbReference type="GO" id="GO:0006352">
    <property type="term" value="P:DNA-templated transcription initiation"/>
    <property type="evidence" value="ECO:0000315"/>
    <property type="project" value="EcoCyc"/>
</dbReference>
<dbReference type="GO" id="GO:0006879">
    <property type="term" value="P:intracellular iron ion homeostasis"/>
    <property type="evidence" value="ECO:0000315"/>
    <property type="project" value="EcoCyc"/>
</dbReference>
<dbReference type="GO" id="GO:0006826">
    <property type="term" value="P:iron ion transport"/>
    <property type="evidence" value="ECO:0007669"/>
    <property type="project" value="UniProtKB-KW"/>
</dbReference>
<dbReference type="GO" id="GO:0006355">
    <property type="term" value="P:regulation of DNA-templated transcription"/>
    <property type="evidence" value="ECO:0000318"/>
    <property type="project" value="GO_Central"/>
</dbReference>
<dbReference type="GO" id="GO:2000142">
    <property type="term" value="P:regulation of DNA-templated transcription initiation"/>
    <property type="evidence" value="ECO:0000250"/>
    <property type="project" value="ComplexPortal"/>
</dbReference>
<dbReference type="CDD" id="cd06171">
    <property type="entry name" value="Sigma70_r4"/>
    <property type="match status" value="1"/>
</dbReference>
<dbReference type="Gene3D" id="1.10.1740.10">
    <property type="match status" value="1"/>
</dbReference>
<dbReference type="Gene3D" id="1.10.10.10">
    <property type="entry name" value="Winged helix-like DNA-binding domain superfamily/Winged helix DNA-binding domain"/>
    <property type="match status" value="1"/>
</dbReference>
<dbReference type="InterPro" id="IPR039425">
    <property type="entry name" value="RNA_pol_sigma-70-like"/>
</dbReference>
<dbReference type="InterPro" id="IPR014284">
    <property type="entry name" value="RNA_pol_sigma-70_dom"/>
</dbReference>
<dbReference type="InterPro" id="IPR000838">
    <property type="entry name" value="RNA_pol_sigma70_ECF_CS"/>
</dbReference>
<dbReference type="InterPro" id="IPR007627">
    <property type="entry name" value="RNA_pol_sigma70_r2"/>
</dbReference>
<dbReference type="InterPro" id="IPR013249">
    <property type="entry name" value="RNA_pol_sigma70_r4_t2"/>
</dbReference>
<dbReference type="InterPro" id="IPR013325">
    <property type="entry name" value="RNA_pol_sigma_r2"/>
</dbReference>
<dbReference type="InterPro" id="IPR013324">
    <property type="entry name" value="RNA_pol_sigma_r3/r4-like"/>
</dbReference>
<dbReference type="InterPro" id="IPR036388">
    <property type="entry name" value="WH-like_DNA-bd_sf"/>
</dbReference>
<dbReference type="NCBIfam" id="NF041727">
    <property type="entry name" value="ECF_sigma_FecI"/>
    <property type="match status" value="1"/>
</dbReference>
<dbReference type="NCBIfam" id="NF007232">
    <property type="entry name" value="PRK09651.1"/>
    <property type="match status" value="1"/>
</dbReference>
<dbReference type="NCBIfam" id="NF009180">
    <property type="entry name" value="PRK12528.1"/>
    <property type="match status" value="1"/>
</dbReference>
<dbReference type="NCBIfam" id="TIGR02937">
    <property type="entry name" value="sigma70-ECF"/>
    <property type="match status" value="1"/>
</dbReference>
<dbReference type="PANTHER" id="PTHR43133">
    <property type="entry name" value="RNA POLYMERASE ECF-TYPE SIGMA FACTO"/>
    <property type="match status" value="1"/>
</dbReference>
<dbReference type="PANTHER" id="PTHR43133:SF63">
    <property type="entry name" value="RNA POLYMERASE SIGMA FACTOR FECI-RELATED"/>
    <property type="match status" value="1"/>
</dbReference>
<dbReference type="Pfam" id="PF04542">
    <property type="entry name" value="Sigma70_r2"/>
    <property type="match status" value="1"/>
</dbReference>
<dbReference type="Pfam" id="PF08281">
    <property type="entry name" value="Sigma70_r4_2"/>
    <property type="match status" value="1"/>
</dbReference>
<dbReference type="SUPFAM" id="SSF88946">
    <property type="entry name" value="Sigma2 domain of RNA polymerase sigma factors"/>
    <property type="match status" value="1"/>
</dbReference>
<dbReference type="SUPFAM" id="SSF88659">
    <property type="entry name" value="Sigma3 and sigma4 domains of RNA polymerase sigma factors"/>
    <property type="match status" value="1"/>
</dbReference>
<dbReference type="PROSITE" id="PS01063">
    <property type="entry name" value="SIGMA70_ECF"/>
    <property type="match status" value="1"/>
</dbReference>
<accession>P23484</accession>
<accession>Q2M622</accession>